<reference key="1">
    <citation type="journal article" date="2004" name="Nat. Biotechnol.">
        <title>Complete genome sequence of the metabolically versatile photosynthetic bacterium Rhodopseudomonas palustris.</title>
        <authorList>
            <person name="Larimer F.W."/>
            <person name="Chain P."/>
            <person name="Hauser L."/>
            <person name="Lamerdin J.E."/>
            <person name="Malfatti S."/>
            <person name="Do L."/>
            <person name="Land M.L."/>
            <person name="Pelletier D.A."/>
            <person name="Beatty J.T."/>
            <person name="Lang A.S."/>
            <person name="Tabita F.R."/>
            <person name="Gibson J.L."/>
            <person name="Hanson T.E."/>
            <person name="Bobst C."/>
            <person name="Torres y Torres J.L."/>
            <person name="Peres C."/>
            <person name="Harrison F.H."/>
            <person name="Gibson J."/>
            <person name="Harwood C.S."/>
        </authorList>
    </citation>
    <scope>NUCLEOTIDE SEQUENCE [LARGE SCALE GENOMIC DNA]</scope>
    <source>
        <strain>ATCC BAA-98 / CGA009</strain>
    </source>
</reference>
<organism>
    <name type="scientific">Rhodopseudomonas palustris (strain ATCC BAA-98 / CGA009)</name>
    <dbReference type="NCBI Taxonomy" id="258594"/>
    <lineage>
        <taxon>Bacteria</taxon>
        <taxon>Pseudomonadati</taxon>
        <taxon>Pseudomonadota</taxon>
        <taxon>Alphaproteobacteria</taxon>
        <taxon>Hyphomicrobiales</taxon>
        <taxon>Nitrobacteraceae</taxon>
        <taxon>Rhodopseudomonas</taxon>
    </lineage>
</organism>
<feature type="chain" id="PRO_0000075189" description="Alanine--tRNA ligase">
    <location>
        <begin position="1"/>
        <end position="889"/>
    </location>
</feature>
<feature type="binding site" evidence="1">
    <location>
        <position position="564"/>
    </location>
    <ligand>
        <name>Zn(2+)</name>
        <dbReference type="ChEBI" id="CHEBI:29105"/>
    </ligand>
</feature>
<feature type="binding site" evidence="1">
    <location>
        <position position="568"/>
    </location>
    <ligand>
        <name>Zn(2+)</name>
        <dbReference type="ChEBI" id="CHEBI:29105"/>
    </ligand>
</feature>
<feature type="binding site" evidence="1">
    <location>
        <position position="677"/>
    </location>
    <ligand>
        <name>Zn(2+)</name>
        <dbReference type="ChEBI" id="CHEBI:29105"/>
    </ligand>
</feature>
<feature type="binding site" evidence="1">
    <location>
        <position position="681"/>
    </location>
    <ligand>
        <name>Zn(2+)</name>
        <dbReference type="ChEBI" id="CHEBI:29105"/>
    </ligand>
</feature>
<evidence type="ECO:0000255" key="1">
    <source>
        <dbReference type="HAMAP-Rule" id="MF_00036"/>
    </source>
</evidence>
<sequence>MSGVNEIRSTFLNYFAKNGHEIVSSSPLVPRNDPTLMFTNAGMVQFKNVFTGLEKRSYQRATTSQKCVRAGGKHNDLDNVGYTARHLTFFEMLGNFSFGDYFKERAIELAWNLITRDFGLKKDKLLVTVYHTDDEAAGYWKKIAGFSDDRIIRIPTSDNFWAMGDTGPCGPCSEIFIDRGEHIFGGPPGSPDEDGDRFLEFWNLVFMQYDQVTKDERVPLPRPSIDTGMGLERMASILQGVDSVFDTDLFRSLIDATSSALGRGPTEQDAASFRVIADHLRSSSFLIADGVLPSNEGRGYVLRRIMRRAMRHAQLLGASEPLMWRLVWALVREMGQAYPELVRAEAMIEETMRLEETRFRKTLDRGLAILDEKSAGLKKGDMFDGETAFTLYDTYGFPLDLTQDALRNRGINVDIASFTDAMDRQRAKARASWAGSGEAATEAVWFSLREKLGATEFLGYDTETAEGVVTALVKDGAEVDALKAGESGAIIVNQTPFYAESGGQVGDTGVLTADGVRFVVTDTMKKAGDLFVHFGTVEQGSIKLGDALALDVDHARRSAIRANHSATHLLHEALRQVLGDHIAQKGSLVAPDRLRFDFVHQKPITQDELRKVEDIANDIVLENDEVVTRLMAVDDAREAGARALFGEKYGDEVRVVSMGKAARDHGSNVFGWSVELCGGTHVKRTGDIGLVSITGESAVAAGVRRIEALTGRAARHNANAAISTAKLAASELRTTLDDMPARITALMDERKKLERELSEARKKLAMGGSAAGDGAASDVRDIGGIKLMARAVEGIEIKDLKGLVDQGKKQLGSGVIALVATSEDGKGSIVVGVTPDLVSRFSAVDLVRKASEVLGGKGGGGKPDMAQAGGPDGSKAGAALEAIAAAIGG</sequence>
<gene>
    <name evidence="1" type="primary">alaS</name>
    <name type="ordered locus">RPA3847</name>
</gene>
<keyword id="KW-0030">Aminoacyl-tRNA synthetase</keyword>
<keyword id="KW-0067">ATP-binding</keyword>
<keyword id="KW-0963">Cytoplasm</keyword>
<keyword id="KW-0436">Ligase</keyword>
<keyword id="KW-0479">Metal-binding</keyword>
<keyword id="KW-0547">Nucleotide-binding</keyword>
<keyword id="KW-0648">Protein biosynthesis</keyword>
<keyword id="KW-0694">RNA-binding</keyword>
<keyword id="KW-0820">tRNA-binding</keyword>
<keyword id="KW-0862">Zinc</keyword>
<proteinExistence type="inferred from homology"/>
<protein>
    <recommendedName>
        <fullName evidence="1">Alanine--tRNA ligase</fullName>
        <ecNumber evidence="1">6.1.1.7</ecNumber>
    </recommendedName>
    <alternativeName>
        <fullName evidence="1">Alanyl-tRNA synthetase</fullName>
        <shortName evidence="1">AlaRS</shortName>
    </alternativeName>
</protein>
<name>SYA_RHOPA</name>
<comment type="function">
    <text evidence="1">Catalyzes the attachment of alanine to tRNA(Ala) in a two-step reaction: alanine is first activated by ATP to form Ala-AMP and then transferred to the acceptor end of tRNA(Ala). Also edits incorrectly charged Ser-tRNA(Ala) and Gly-tRNA(Ala) via its editing domain.</text>
</comment>
<comment type="catalytic activity">
    <reaction evidence="1">
        <text>tRNA(Ala) + L-alanine + ATP = L-alanyl-tRNA(Ala) + AMP + diphosphate</text>
        <dbReference type="Rhea" id="RHEA:12540"/>
        <dbReference type="Rhea" id="RHEA-COMP:9657"/>
        <dbReference type="Rhea" id="RHEA-COMP:9923"/>
        <dbReference type="ChEBI" id="CHEBI:30616"/>
        <dbReference type="ChEBI" id="CHEBI:33019"/>
        <dbReference type="ChEBI" id="CHEBI:57972"/>
        <dbReference type="ChEBI" id="CHEBI:78442"/>
        <dbReference type="ChEBI" id="CHEBI:78497"/>
        <dbReference type="ChEBI" id="CHEBI:456215"/>
        <dbReference type="EC" id="6.1.1.7"/>
    </reaction>
</comment>
<comment type="cofactor">
    <cofactor evidence="1">
        <name>Zn(2+)</name>
        <dbReference type="ChEBI" id="CHEBI:29105"/>
    </cofactor>
    <text evidence="1">Binds 1 zinc ion per subunit.</text>
</comment>
<comment type="subcellular location">
    <subcellularLocation>
        <location evidence="1">Cytoplasm</location>
    </subcellularLocation>
</comment>
<comment type="domain">
    <text evidence="1">Consists of three domains; the N-terminal catalytic domain, the editing domain and the C-terminal C-Ala domain. The editing domain removes incorrectly charged amino acids, while the C-Ala domain, along with tRNA(Ala), serves as a bridge to cooperatively bring together the editing and aminoacylation centers thus stimulating deacylation of misacylated tRNAs.</text>
</comment>
<comment type="similarity">
    <text evidence="1">Belongs to the class-II aminoacyl-tRNA synthetase family.</text>
</comment>
<dbReference type="EC" id="6.1.1.7" evidence="1"/>
<dbReference type="EMBL" id="BX572605">
    <property type="protein sequence ID" value="CAE29288.1"/>
    <property type="molecule type" value="Genomic_DNA"/>
</dbReference>
<dbReference type="RefSeq" id="WP_011159383.1">
    <property type="nucleotide sequence ID" value="NZ_CP116810.1"/>
</dbReference>
<dbReference type="SMR" id="P61706"/>
<dbReference type="STRING" id="258594.RPA3847"/>
<dbReference type="GeneID" id="66894956"/>
<dbReference type="eggNOG" id="COG0013">
    <property type="taxonomic scope" value="Bacteria"/>
</dbReference>
<dbReference type="HOGENOM" id="CLU_004485_1_1_5"/>
<dbReference type="PhylomeDB" id="P61706"/>
<dbReference type="GO" id="GO:0005829">
    <property type="term" value="C:cytosol"/>
    <property type="evidence" value="ECO:0007669"/>
    <property type="project" value="TreeGrafter"/>
</dbReference>
<dbReference type="GO" id="GO:0004813">
    <property type="term" value="F:alanine-tRNA ligase activity"/>
    <property type="evidence" value="ECO:0007669"/>
    <property type="project" value="UniProtKB-UniRule"/>
</dbReference>
<dbReference type="GO" id="GO:0002161">
    <property type="term" value="F:aminoacyl-tRNA deacylase activity"/>
    <property type="evidence" value="ECO:0007669"/>
    <property type="project" value="TreeGrafter"/>
</dbReference>
<dbReference type="GO" id="GO:0005524">
    <property type="term" value="F:ATP binding"/>
    <property type="evidence" value="ECO:0007669"/>
    <property type="project" value="UniProtKB-UniRule"/>
</dbReference>
<dbReference type="GO" id="GO:0000049">
    <property type="term" value="F:tRNA binding"/>
    <property type="evidence" value="ECO:0007669"/>
    <property type="project" value="UniProtKB-KW"/>
</dbReference>
<dbReference type="GO" id="GO:0008270">
    <property type="term" value="F:zinc ion binding"/>
    <property type="evidence" value="ECO:0007669"/>
    <property type="project" value="UniProtKB-UniRule"/>
</dbReference>
<dbReference type="GO" id="GO:0006419">
    <property type="term" value="P:alanyl-tRNA aminoacylation"/>
    <property type="evidence" value="ECO:0007669"/>
    <property type="project" value="UniProtKB-UniRule"/>
</dbReference>
<dbReference type="GO" id="GO:0045892">
    <property type="term" value="P:negative regulation of DNA-templated transcription"/>
    <property type="evidence" value="ECO:0007669"/>
    <property type="project" value="TreeGrafter"/>
</dbReference>
<dbReference type="CDD" id="cd00673">
    <property type="entry name" value="AlaRS_core"/>
    <property type="match status" value="1"/>
</dbReference>
<dbReference type="FunFam" id="2.40.30.130:FF:000001">
    <property type="entry name" value="Alanine--tRNA ligase"/>
    <property type="match status" value="1"/>
</dbReference>
<dbReference type="FunFam" id="3.10.310.40:FF:000001">
    <property type="entry name" value="Alanine--tRNA ligase"/>
    <property type="match status" value="1"/>
</dbReference>
<dbReference type="FunFam" id="3.30.54.20:FF:000001">
    <property type="entry name" value="Alanine--tRNA ligase"/>
    <property type="match status" value="1"/>
</dbReference>
<dbReference type="FunFam" id="3.30.930.10:FF:000004">
    <property type="entry name" value="Alanine--tRNA ligase"/>
    <property type="match status" value="1"/>
</dbReference>
<dbReference type="FunFam" id="3.30.980.10:FF:000004">
    <property type="entry name" value="Alanine--tRNA ligase, cytoplasmic"/>
    <property type="match status" value="1"/>
</dbReference>
<dbReference type="Gene3D" id="2.40.30.130">
    <property type="match status" value="1"/>
</dbReference>
<dbReference type="Gene3D" id="3.10.310.40">
    <property type="match status" value="1"/>
</dbReference>
<dbReference type="Gene3D" id="3.30.54.20">
    <property type="match status" value="1"/>
</dbReference>
<dbReference type="Gene3D" id="6.10.250.550">
    <property type="match status" value="1"/>
</dbReference>
<dbReference type="Gene3D" id="3.30.930.10">
    <property type="entry name" value="Bira Bifunctional Protein, Domain 2"/>
    <property type="match status" value="1"/>
</dbReference>
<dbReference type="Gene3D" id="3.30.980.10">
    <property type="entry name" value="Threonyl-trna Synthetase, Chain A, domain 2"/>
    <property type="match status" value="1"/>
</dbReference>
<dbReference type="HAMAP" id="MF_00036_B">
    <property type="entry name" value="Ala_tRNA_synth_B"/>
    <property type="match status" value="1"/>
</dbReference>
<dbReference type="InterPro" id="IPR045864">
    <property type="entry name" value="aa-tRNA-synth_II/BPL/LPL"/>
</dbReference>
<dbReference type="InterPro" id="IPR002318">
    <property type="entry name" value="Ala-tRNA-lgiase_IIc"/>
</dbReference>
<dbReference type="InterPro" id="IPR018162">
    <property type="entry name" value="Ala-tRNA-ligase_IIc_anticod-bd"/>
</dbReference>
<dbReference type="InterPro" id="IPR018165">
    <property type="entry name" value="Ala-tRNA-synth_IIc_core"/>
</dbReference>
<dbReference type="InterPro" id="IPR018164">
    <property type="entry name" value="Ala-tRNA-synth_IIc_N"/>
</dbReference>
<dbReference type="InterPro" id="IPR050058">
    <property type="entry name" value="Ala-tRNA_ligase"/>
</dbReference>
<dbReference type="InterPro" id="IPR023033">
    <property type="entry name" value="Ala_tRNA_ligase_euk/bac"/>
</dbReference>
<dbReference type="InterPro" id="IPR003156">
    <property type="entry name" value="DHHA1_dom"/>
</dbReference>
<dbReference type="InterPro" id="IPR018163">
    <property type="entry name" value="Thr/Ala-tRNA-synth_IIc_edit"/>
</dbReference>
<dbReference type="InterPro" id="IPR009000">
    <property type="entry name" value="Transl_B-barrel_sf"/>
</dbReference>
<dbReference type="InterPro" id="IPR012947">
    <property type="entry name" value="tRNA_SAD"/>
</dbReference>
<dbReference type="NCBIfam" id="TIGR00344">
    <property type="entry name" value="alaS"/>
    <property type="match status" value="1"/>
</dbReference>
<dbReference type="PANTHER" id="PTHR11777:SF9">
    <property type="entry name" value="ALANINE--TRNA LIGASE, CYTOPLASMIC"/>
    <property type="match status" value="1"/>
</dbReference>
<dbReference type="PANTHER" id="PTHR11777">
    <property type="entry name" value="ALANYL-TRNA SYNTHETASE"/>
    <property type="match status" value="1"/>
</dbReference>
<dbReference type="Pfam" id="PF02272">
    <property type="entry name" value="DHHA1"/>
    <property type="match status" value="1"/>
</dbReference>
<dbReference type="Pfam" id="PF01411">
    <property type="entry name" value="tRNA-synt_2c"/>
    <property type="match status" value="1"/>
</dbReference>
<dbReference type="Pfam" id="PF07973">
    <property type="entry name" value="tRNA_SAD"/>
    <property type="match status" value="1"/>
</dbReference>
<dbReference type="PRINTS" id="PR00980">
    <property type="entry name" value="TRNASYNTHALA"/>
</dbReference>
<dbReference type="SMART" id="SM00863">
    <property type="entry name" value="tRNA_SAD"/>
    <property type="match status" value="1"/>
</dbReference>
<dbReference type="SUPFAM" id="SSF55681">
    <property type="entry name" value="Class II aaRS and biotin synthetases"/>
    <property type="match status" value="1"/>
</dbReference>
<dbReference type="SUPFAM" id="SSF101353">
    <property type="entry name" value="Putative anticodon-binding domain of alanyl-tRNA synthetase (AlaRS)"/>
    <property type="match status" value="1"/>
</dbReference>
<dbReference type="SUPFAM" id="SSF55186">
    <property type="entry name" value="ThrRS/AlaRS common domain"/>
    <property type="match status" value="1"/>
</dbReference>
<dbReference type="SUPFAM" id="SSF50447">
    <property type="entry name" value="Translation proteins"/>
    <property type="match status" value="1"/>
</dbReference>
<dbReference type="PROSITE" id="PS50860">
    <property type="entry name" value="AA_TRNA_LIGASE_II_ALA"/>
    <property type="match status" value="1"/>
</dbReference>
<accession>P61706</accession>